<reference key="1">
    <citation type="journal article" date="2009" name="Infect. Immun.">
        <title>Comparative genomics reveal extensive transposon-mediated genomic plasticity and diversity among potential effector proteins within the genus Coxiella.</title>
        <authorList>
            <person name="Beare P.A."/>
            <person name="Unsworth N."/>
            <person name="Andoh M."/>
            <person name="Voth D.E."/>
            <person name="Omsland A."/>
            <person name="Gilk S.D."/>
            <person name="Williams K.P."/>
            <person name="Sobral B.W."/>
            <person name="Kupko J.J. III"/>
            <person name="Porcella S.F."/>
            <person name="Samuel J.E."/>
            <person name="Heinzen R.A."/>
        </authorList>
    </citation>
    <scope>NUCLEOTIDE SEQUENCE [LARGE SCALE GENOMIC DNA]</scope>
    <source>
        <strain>Dugway 5J108-111</strain>
    </source>
</reference>
<dbReference type="EC" id="7.1.2.2" evidence="1"/>
<dbReference type="EMBL" id="CP000733">
    <property type="protein sequence ID" value="ABS76588.1"/>
    <property type="molecule type" value="Genomic_DNA"/>
</dbReference>
<dbReference type="RefSeq" id="WP_005770035.1">
    <property type="nucleotide sequence ID" value="NC_009727.1"/>
</dbReference>
<dbReference type="SMR" id="A9KBF9"/>
<dbReference type="KEGG" id="cbd:CBUD_0178"/>
<dbReference type="HOGENOM" id="CLU_010091_2_1_6"/>
<dbReference type="Proteomes" id="UP000008555">
    <property type="component" value="Chromosome"/>
</dbReference>
<dbReference type="GO" id="GO:0005886">
    <property type="term" value="C:plasma membrane"/>
    <property type="evidence" value="ECO:0007669"/>
    <property type="project" value="UniProtKB-SubCell"/>
</dbReference>
<dbReference type="GO" id="GO:0045259">
    <property type="term" value="C:proton-transporting ATP synthase complex"/>
    <property type="evidence" value="ECO:0007669"/>
    <property type="project" value="UniProtKB-KW"/>
</dbReference>
<dbReference type="GO" id="GO:0043531">
    <property type="term" value="F:ADP binding"/>
    <property type="evidence" value="ECO:0007669"/>
    <property type="project" value="TreeGrafter"/>
</dbReference>
<dbReference type="GO" id="GO:0005524">
    <property type="term" value="F:ATP binding"/>
    <property type="evidence" value="ECO:0007669"/>
    <property type="project" value="UniProtKB-UniRule"/>
</dbReference>
<dbReference type="GO" id="GO:0046933">
    <property type="term" value="F:proton-transporting ATP synthase activity, rotational mechanism"/>
    <property type="evidence" value="ECO:0007669"/>
    <property type="project" value="UniProtKB-UniRule"/>
</dbReference>
<dbReference type="CDD" id="cd18113">
    <property type="entry name" value="ATP-synt_F1_alpha_C"/>
    <property type="match status" value="1"/>
</dbReference>
<dbReference type="CDD" id="cd18116">
    <property type="entry name" value="ATP-synt_F1_alpha_N"/>
    <property type="match status" value="1"/>
</dbReference>
<dbReference type="CDD" id="cd01132">
    <property type="entry name" value="F1-ATPase_alpha_CD"/>
    <property type="match status" value="1"/>
</dbReference>
<dbReference type="FunFam" id="1.20.150.20:FF:000001">
    <property type="entry name" value="ATP synthase subunit alpha"/>
    <property type="match status" value="1"/>
</dbReference>
<dbReference type="FunFam" id="2.40.30.20:FF:000001">
    <property type="entry name" value="ATP synthase subunit alpha"/>
    <property type="match status" value="1"/>
</dbReference>
<dbReference type="FunFam" id="3.40.50.300:FF:000002">
    <property type="entry name" value="ATP synthase subunit alpha"/>
    <property type="match status" value="1"/>
</dbReference>
<dbReference type="Gene3D" id="2.40.30.20">
    <property type="match status" value="1"/>
</dbReference>
<dbReference type="Gene3D" id="1.20.150.20">
    <property type="entry name" value="ATP synthase alpha/beta chain, C-terminal domain"/>
    <property type="match status" value="1"/>
</dbReference>
<dbReference type="Gene3D" id="3.40.50.300">
    <property type="entry name" value="P-loop containing nucleotide triphosphate hydrolases"/>
    <property type="match status" value="1"/>
</dbReference>
<dbReference type="HAMAP" id="MF_01346">
    <property type="entry name" value="ATP_synth_alpha_bact"/>
    <property type="match status" value="1"/>
</dbReference>
<dbReference type="InterPro" id="IPR023366">
    <property type="entry name" value="ATP_synth_asu-like_sf"/>
</dbReference>
<dbReference type="InterPro" id="IPR000793">
    <property type="entry name" value="ATP_synth_asu_C"/>
</dbReference>
<dbReference type="InterPro" id="IPR038376">
    <property type="entry name" value="ATP_synth_asu_C_sf"/>
</dbReference>
<dbReference type="InterPro" id="IPR033732">
    <property type="entry name" value="ATP_synth_F1_a_nt-bd_dom"/>
</dbReference>
<dbReference type="InterPro" id="IPR005294">
    <property type="entry name" value="ATP_synth_F1_asu"/>
</dbReference>
<dbReference type="InterPro" id="IPR020003">
    <property type="entry name" value="ATPase_a/bsu_AS"/>
</dbReference>
<dbReference type="InterPro" id="IPR004100">
    <property type="entry name" value="ATPase_F1/V1/A1_a/bsu_N"/>
</dbReference>
<dbReference type="InterPro" id="IPR036121">
    <property type="entry name" value="ATPase_F1/V1/A1_a/bsu_N_sf"/>
</dbReference>
<dbReference type="InterPro" id="IPR000194">
    <property type="entry name" value="ATPase_F1/V1/A1_a/bsu_nucl-bd"/>
</dbReference>
<dbReference type="InterPro" id="IPR027417">
    <property type="entry name" value="P-loop_NTPase"/>
</dbReference>
<dbReference type="NCBIfam" id="TIGR00962">
    <property type="entry name" value="atpA"/>
    <property type="match status" value="1"/>
</dbReference>
<dbReference type="NCBIfam" id="NF009884">
    <property type="entry name" value="PRK13343.1"/>
    <property type="match status" value="1"/>
</dbReference>
<dbReference type="PANTHER" id="PTHR48082">
    <property type="entry name" value="ATP SYNTHASE SUBUNIT ALPHA, MITOCHONDRIAL"/>
    <property type="match status" value="1"/>
</dbReference>
<dbReference type="PANTHER" id="PTHR48082:SF2">
    <property type="entry name" value="ATP SYNTHASE SUBUNIT ALPHA, MITOCHONDRIAL"/>
    <property type="match status" value="1"/>
</dbReference>
<dbReference type="Pfam" id="PF00006">
    <property type="entry name" value="ATP-synt_ab"/>
    <property type="match status" value="1"/>
</dbReference>
<dbReference type="Pfam" id="PF00306">
    <property type="entry name" value="ATP-synt_ab_C"/>
    <property type="match status" value="1"/>
</dbReference>
<dbReference type="Pfam" id="PF02874">
    <property type="entry name" value="ATP-synt_ab_N"/>
    <property type="match status" value="1"/>
</dbReference>
<dbReference type="PIRSF" id="PIRSF039088">
    <property type="entry name" value="F_ATPase_subunit_alpha"/>
    <property type="match status" value="1"/>
</dbReference>
<dbReference type="SUPFAM" id="SSF47917">
    <property type="entry name" value="C-terminal domain of alpha and beta subunits of F1 ATP synthase"/>
    <property type="match status" value="1"/>
</dbReference>
<dbReference type="SUPFAM" id="SSF50615">
    <property type="entry name" value="N-terminal domain of alpha and beta subunits of F1 ATP synthase"/>
    <property type="match status" value="1"/>
</dbReference>
<dbReference type="SUPFAM" id="SSF52540">
    <property type="entry name" value="P-loop containing nucleoside triphosphate hydrolases"/>
    <property type="match status" value="1"/>
</dbReference>
<dbReference type="PROSITE" id="PS00152">
    <property type="entry name" value="ATPASE_ALPHA_BETA"/>
    <property type="match status" value="1"/>
</dbReference>
<proteinExistence type="inferred from homology"/>
<gene>
    <name evidence="1" type="primary">atpA</name>
    <name type="ordered locus">CBUD_0178</name>
</gene>
<protein>
    <recommendedName>
        <fullName evidence="1">ATP synthase subunit alpha</fullName>
        <ecNumber evidence="1">7.1.2.2</ecNumber>
    </recommendedName>
    <alternativeName>
        <fullName evidence="1">ATP synthase F1 sector subunit alpha</fullName>
    </alternativeName>
    <alternativeName>
        <fullName evidence="1">F-ATPase subunit alpha</fullName>
    </alternativeName>
</protein>
<keyword id="KW-0066">ATP synthesis</keyword>
<keyword id="KW-0067">ATP-binding</keyword>
<keyword id="KW-0997">Cell inner membrane</keyword>
<keyword id="KW-1003">Cell membrane</keyword>
<keyword id="KW-0139">CF(1)</keyword>
<keyword id="KW-0375">Hydrogen ion transport</keyword>
<keyword id="KW-0406">Ion transport</keyword>
<keyword id="KW-0472">Membrane</keyword>
<keyword id="KW-0547">Nucleotide-binding</keyword>
<keyword id="KW-1278">Translocase</keyword>
<keyword id="KW-0813">Transport</keyword>
<comment type="function">
    <text evidence="1">Produces ATP from ADP in the presence of a proton gradient across the membrane. The alpha chain is a regulatory subunit.</text>
</comment>
<comment type="catalytic activity">
    <reaction evidence="1">
        <text>ATP + H2O + 4 H(+)(in) = ADP + phosphate + 5 H(+)(out)</text>
        <dbReference type="Rhea" id="RHEA:57720"/>
        <dbReference type="ChEBI" id="CHEBI:15377"/>
        <dbReference type="ChEBI" id="CHEBI:15378"/>
        <dbReference type="ChEBI" id="CHEBI:30616"/>
        <dbReference type="ChEBI" id="CHEBI:43474"/>
        <dbReference type="ChEBI" id="CHEBI:456216"/>
        <dbReference type="EC" id="7.1.2.2"/>
    </reaction>
</comment>
<comment type="subunit">
    <text evidence="1">F-type ATPases have 2 components, CF(1) - the catalytic core - and CF(0) - the membrane proton channel. CF(1) has five subunits: alpha(3), beta(3), gamma(1), delta(1), epsilon(1). CF(0) has three main subunits: a(1), b(2) and c(9-12). The alpha and beta chains form an alternating ring which encloses part of the gamma chain. CF(1) is attached to CF(0) by a central stalk formed by the gamma and epsilon chains, while a peripheral stalk is formed by the delta and b chains.</text>
</comment>
<comment type="subcellular location">
    <subcellularLocation>
        <location evidence="1">Cell inner membrane</location>
        <topology evidence="1">Peripheral membrane protein</topology>
    </subcellularLocation>
</comment>
<comment type="similarity">
    <text evidence="1">Belongs to the ATPase alpha/beta chains family.</text>
</comment>
<name>ATPA_COXBN</name>
<sequence>MSTQLRAAEISDIIESRIEKFGIKAEERTEGTILNIKDGIVRVYGLRDVMFGEMVEFPENTYGLAFNLERDSVGAVVMGPYEHLEEGMTARCTGRILEVPVGEALLGRVVDGLGKPIDGKGPIDTSETSPIEKVAPGVITRKSVDTSLPTGLKSIDAMVPIGRGQRELIIGDRQTGKTAIAIDTIINQKHTGVKCIYVAIGQKQSSVAAVVRKLEEHGAMEHTIVVNASASEAAALQYLAPYAGCTMGEYFRDRGQDALIVYDDLTKQAWAYRQISLLLRRPPGREAYPGDIFYLHSRLLERAAHVNEAYVKEFTKGKVTGKTGSLTALPIIETQAGDVSAFIPTNVISITDGQIYLDVNLFNAGIRPAINAGLSVSRVGGAAQTKIIKKLIGGLRIALAQYRELEAFSQFASDLDEATRKQLEHGQRVMEILKQPQYQPLSVGEMAIIWYVVNNNYLDQVELKKVVDFERSLLSFLRDQHQDLLDEINKNPNYSEKIIEKIKAVVEEFVKTQSY</sequence>
<feature type="chain" id="PRO_1000086873" description="ATP synthase subunit alpha">
    <location>
        <begin position="1"/>
        <end position="515"/>
    </location>
</feature>
<feature type="binding site" evidence="1">
    <location>
        <begin position="171"/>
        <end position="178"/>
    </location>
    <ligand>
        <name>ATP</name>
        <dbReference type="ChEBI" id="CHEBI:30616"/>
    </ligand>
</feature>
<feature type="site" description="Required for activity" evidence="1">
    <location>
        <position position="375"/>
    </location>
</feature>
<evidence type="ECO:0000255" key="1">
    <source>
        <dbReference type="HAMAP-Rule" id="MF_01346"/>
    </source>
</evidence>
<organism>
    <name type="scientific">Coxiella burnetii (strain Dugway 5J108-111)</name>
    <dbReference type="NCBI Taxonomy" id="434922"/>
    <lineage>
        <taxon>Bacteria</taxon>
        <taxon>Pseudomonadati</taxon>
        <taxon>Pseudomonadota</taxon>
        <taxon>Gammaproteobacteria</taxon>
        <taxon>Legionellales</taxon>
        <taxon>Coxiellaceae</taxon>
        <taxon>Coxiella</taxon>
    </lineage>
</organism>
<accession>A9KBF9</accession>